<reference key="1">
    <citation type="journal article" date="1999" name="Nature">
        <title>Sequence and analysis of chromosome 4 of the plant Arabidopsis thaliana.</title>
        <authorList>
            <person name="Mayer K.F.X."/>
            <person name="Schueller C."/>
            <person name="Wambutt R."/>
            <person name="Murphy G."/>
            <person name="Volckaert G."/>
            <person name="Pohl T."/>
            <person name="Duesterhoeft A."/>
            <person name="Stiekema W."/>
            <person name="Entian K.-D."/>
            <person name="Terryn N."/>
            <person name="Harris B."/>
            <person name="Ansorge W."/>
            <person name="Brandt P."/>
            <person name="Grivell L.A."/>
            <person name="Rieger M."/>
            <person name="Weichselgartner M."/>
            <person name="de Simone V."/>
            <person name="Obermaier B."/>
            <person name="Mache R."/>
            <person name="Mueller M."/>
            <person name="Kreis M."/>
            <person name="Delseny M."/>
            <person name="Puigdomenech P."/>
            <person name="Watson M."/>
            <person name="Schmidtheini T."/>
            <person name="Reichert B."/>
            <person name="Portetelle D."/>
            <person name="Perez-Alonso M."/>
            <person name="Boutry M."/>
            <person name="Bancroft I."/>
            <person name="Vos P."/>
            <person name="Hoheisel J."/>
            <person name="Zimmermann W."/>
            <person name="Wedler H."/>
            <person name="Ridley P."/>
            <person name="Langham S.-A."/>
            <person name="McCullagh B."/>
            <person name="Bilham L."/>
            <person name="Robben J."/>
            <person name="van der Schueren J."/>
            <person name="Grymonprez B."/>
            <person name="Chuang Y.-J."/>
            <person name="Vandenbussche F."/>
            <person name="Braeken M."/>
            <person name="Weltjens I."/>
            <person name="Voet M."/>
            <person name="Bastiaens I."/>
            <person name="Aert R."/>
            <person name="Defoor E."/>
            <person name="Weitzenegger T."/>
            <person name="Bothe G."/>
            <person name="Ramsperger U."/>
            <person name="Hilbert H."/>
            <person name="Braun M."/>
            <person name="Holzer E."/>
            <person name="Brandt A."/>
            <person name="Peters S."/>
            <person name="van Staveren M."/>
            <person name="Dirkse W."/>
            <person name="Mooijman P."/>
            <person name="Klein Lankhorst R."/>
            <person name="Rose M."/>
            <person name="Hauf J."/>
            <person name="Koetter P."/>
            <person name="Berneiser S."/>
            <person name="Hempel S."/>
            <person name="Feldpausch M."/>
            <person name="Lamberth S."/>
            <person name="Van den Daele H."/>
            <person name="De Keyser A."/>
            <person name="Buysshaert C."/>
            <person name="Gielen J."/>
            <person name="Villarroel R."/>
            <person name="De Clercq R."/>
            <person name="van Montagu M."/>
            <person name="Rogers J."/>
            <person name="Cronin A."/>
            <person name="Quail M.A."/>
            <person name="Bray-Allen S."/>
            <person name="Clark L."/>
            <person name="Doggett J."/>
            <person name="Hall S."/>
            <person name="Kay M."/>
            <person name="Lennard N."/>
            <person name="McLay K."/>
            <person name="Mayes R."/>
            <person name="Pettett A."/>
            <person name="Rajandream M.A."/>
            <person name="Lyne M."/>
            <person name="Benes V."/>
            <person name="Rechmann S."/>
            <person name="Borkova D."/>
            <person name="Bloecker H."/>
            <person name="Scharfe M."/>
            <person name="Grimm M."/>
            <person name="Loehnert T.-H."/>
            <person name="Dose S."/>
            <person name="de Haan M."/>
            <person name="Maarse A.C."/>
            <person name="Schaefer M."/>
            <person name="Mueller-Auer S."/>
            <person name="Gabel C."/>
            <person name="Fuchs M."/>
            <person name="Fartmann B."/>
            <person name="Granderath K."/>
            <person name="Dauner D."/>
            <person name="Herzl A."/>
            <person name="Neumann S."/>
            <person name="Argiriou A."/>
            <person name="Vitale D."/>
            <person name="Liguori R."/>
            <person name="Piravandi E."/>
            <person name="Massenet O."/>
            <person name="Quigley F."/>
            <person name="Clabauld G."/>
            <person name="Muendlein A."/>
            <person name="Felber R."/>
            <person name="Schnabl S."/>
            <person name="Hiller R."/>
            <person name="Schmidt W."/>
            <person name="Lecharny A."/>
            <person name="Aubourg S."/>
            <person name="Chefdor F."/>
            <person name="Cooke R."/>
            <person name="Berger C."/>
            <person name="Monfort A."/>
            <person name="Casacuberta E."/>
            <person name="Gibbons T."/>
            <person name="Weber N."/>
            <person name="Vandenbol M."/>
            <person name="Bargues M."/>
            <person name="Terol J."/>
            <person name="Torres A."/>
            <person name="Perez-Perez A."/>
            <person name="Purnelle B."/>
            <person name="Bent E."/>
            <person name="Johnson S."/>
            <person name="Tacon D."/>
            <person name="Jesse T."/>
            <person name="Heijnen L."/>
            <person name="Schwarz S."/>
            <person name="Scholler P."/>
            <person name="Heber S."/>
            <person name="Francs P."/>
            <person name="Bielke C."/>
            <person name="Frishman D."/>
            <person name="Haase D."/>
            <person name="Lemcke K."/>
            <person name="Mewes H.-W."/>
            <person name="Stocker S."/>
            <person name="Zaccaria P."/>
            <person name="Bevan M."/>
            <person name="Wilson R.K."/>
            <person name="de la Bastide M."/>
            <person name="Habermann K."/>
            <person name="Parnell L."/>
            <person name="Dedhia N."/>
            <person name="Gnoj L."/>
            <person name="Schutz K."/>
            <person name="Huang E."/>
            <person name="Spiegel L."/>
            <person name="Sekhon M."/>
            <person name="Murray J."/>
            <person name="Sheet P."/>
            <person name="Cordes M."/>
            <person name="Abu-Threideh J."/>
            <person name="Stoneking T."/>
            <person name="Kalicki J."/>
            <person name="Graves T."/>
            <person name="Harmon G."/>
            <person name="Edwards J."/>
            <person name="Latreille P."/>
            <person name="Courtney L."/>
            <person name="Cloud J."/>
            <person name="Abbott A."/>
            <person name="Scott K."/>
            <person name="Johnson D."/>
            <person name="Minx P."/>
            <person name="Bentley D."/>
            <person name="Fulton B."/>
            <person name="Miller N."/>
            <person name="Greco T."/>
            <person name="Kemp K."/>
            <person name="Kramer J."/>
            <person name="Fulton L."/>
            <person name="Mardis E."/>
            <person name="Dante M."/>
            <person name="Pepin K."/>
            <person name="Hillier L.W."/>
            <person name="Nelson J."/>
            <person name="Spieth J."/>
            <person name="Ryan E."/>
            <person name="Andrews S."/>
            <person name="Geisel C."/>
            <person name="Layman D."/>
            <person name="Du H."/>
            <person name="Ali J."/>
            <person name="Berghoff A."/>
            <person name="Jones K."/>
            <person name="Drone K."/>
            <person name="Cotton M."/>
            <person name="Joshu C."/>
            <person name="Antonoiu B."/>
            <person name="Zidanic M."/>
            <person name="Strong C."/>
            <person name="Sun H."/>
            <person name="Lamar B."/>
            <person name="Yordan C."/>
            <person name="Ma P."/>
            <person name="Zhong J."/>
            <person name="Preston R."/>
            <person name="Vil D."/>
            <person name="Shekher M."/>
            <person name="Matero A."/>
            <person name="Shah R."/>
            <person name="Swaby I.K."/>
            <person name="O'Shaughnessy A."/>
            <person name="Rodriguez M."/>
            <person name="Hoffman J."/>
            <person name="Till S."/>
            <person name="Granat S."/>
            <person name="Shohdy N."/>
            <person name="Hasegawa A."/>
            <person name="Hameed A."/>
            <person name="Lodhi M."/>
            <person name="Johnson A."/>
            <person name="Chen E."/>
            <person name="Marra M.A."/>
            <person name="Martienssen R."/>
            <person name="McCombie W.R."/>
        </authorList>
    </citation>
    <scope>NUCLEOTIDE SEQUENCE [LARGE SCALE GENOMIC DNA]</scope>
    <source>
        <strain>cv. Columbia</strain>
    </source>
</reference>
<reference key="2">
    <citation type="journal article" date="2017" name="Plant J.">
        <title>Araport11: a complete reannotation of the Arabidopsis thaliana reference genome.</title>
        <authorList>
            <person name="Cheng C.Y."/>
            <person name="Krishnakumar V."/>
            <person name="Chan A.P."/>
            <person name="Thibaud-Nissen F."/>
            <person name="Schobel S."/>
            <person name="Town C.D."/>
        </authorList>
    </citation>
    <scope>GENOME REANNOTATION</scope>
    <source>
        <strain>cv. Columbia</strain>
    </source>
</reference>
<proteinExistence type="inferred from homology"/>
<organism>
    <name type="scientific">Arabidopsis thaliana</name>
    <name type="common">Mouse-ear cress</name>
    <dbReference type="NCBI Taxonomy" id="3702"/>
    <lineage>
        <taxon>Eukaryota</taxon>
        <taxon>Viridiplantae</taxon>
        <taxon>Streptophyta</taxon>
        <taxon>Embryophyta</taxon>
        <taxon>Tracheophyta</taxon>
        <taxon>Spermatophyta</taxon>
        <taxon>Magnoliopsida</taxon>
        <taxon>eudicotyledons</taxon>
        <taxon>Gunneridae</taxon>
        <taxon>Pentapetalae</taxon>
        <taxon>rosids</taxon>
        <taxon>malvids</taxon>
        <taxon>Brassicales</taxon>
        <taxon>Brassicaceae</taxon>
        <taxon>Camelineae</taxon>
        <taxon>Arabidopsis</taxon>
    </lineage>
</organism>
<protein>
    <recommendedName>
        <fullName>G-type lectin S-receptor-like serine/threonine-protein kinase At4g03230</fullName>
        <ecNumber>2.7.11.1</ecNumber>
    </recommendedName>
</protein>
<sequence length="852" mass="96200">MILSVFFYMFLLHIRRLDCFVAVQDSKTLFKGSTLINDSHGETLVSAGQRFELGFFTPNGSSDERRYLGIWFYNLHPLTVVWVANRESPVLDRSCIFTISKDGNLEVIDSKGRVYWDTGVKPSSVSAERMVKLMDNGNLVLISDGNEANVVWQSFQNPTDTFLPGMRMDENMTLSSWRSFNDPSHGNFTFQMDQEEDKQFIIWKRSMRYWKSGISGKFIGSDEMPYAISYFLSNFTETVTVHNASVPPLFTSLYTNTRFTMSSSGQAQYFRLDGERFWAQIWAEPRDECSVYNACGNFGSCNSKNEEMCKCLPGFRPNFLEKWVKGDFSGGCSRESRICGKDGVVVGDMFLNLSVVEVGSPDSQFDAHNEKECRAECLNNCQCQAYSYEEVDILQSNTKCWIWLEDLNNLKEGYLGSRNVFIRVAVPDIGSHVERGRGRYGEAKTPVVLIIVVTFTSAAILVVLSSTASYVFLQRRKVNKELGSIPRGVHLCDSERHIKELIESGRFKQDDSQGIDVPSFELETILYATSNFSNANKLGQGGFGPVYKGMFPGDQEIAVKRLSRCSGQGLEEFKNEVVLIAKLQHRNLVRLLGYCVAGEEKLLLYEYMPHKSLDFFIFDRKLCQRLDWKMRCNIILGIARGLLYLHQDSRLRIIHRDLKTSNILLDEEMNPKISDFGLARIFGGSETSANTNRVVGTYGYMSPEYALEGLFSFKSDVFSFGVVVIETISGKRNTGFHEPEKSLSLLGHAWDLWKAERGIELLDQALQESCETEGFLKCLNVGLLCVQEDPNDRPTMSNVVFMLGSSEAATLPTPKQPAFVLRRCPSSSKASSSTKPETCSENELTITLEDGR</sequence>
<dbReference type="EC" id="2.7.11.1"/>
<dbReference type="EMBL" id="AC005275">
    <property type="protein sequence ID" value="AAD14451.1"/>
    <property type="molecule type" value="Genomic_DNA"/>
</dbReference>
<dbReference type="EMBL" id="AL161496">
    <property type="protein sequence ID" value="CAB77808.1"/>
    <property type="molecule type" value="Genomic_DNA"/>
</dbReference>
<dbReference type="EMBL" id="CP002687">
    <property type="protein sequence ID" value="AEE82295.1"/>
    <property type="status" value="ALT_SEQ"/>
    <property type="molecule type" value="Genomic_DNA"/>
</dbReference>
<dbReference type="EMBL" id="CP002687">
    <property type="protein sequence ID" value="ANM67764.1"/>
    <property type="molecule type" value="Genomic_DNA"/>
</dbReference>
<dbReference type="PIR" id="A85041">
    <property type="entry name" value="A85041"/>
</dbReference>
<dbReference type="RefSeq" id="NP_001329571.1">
    <property type="nucleotide sequence ID" value="NM_001340436.1"/>
</dbReference>
<dbReference type="RefSeq" id="NP_001329572.1">
    <property type="nucleotide sequence ID" value="NM_001340440.1"/>
</dbReference>
<dbReference type="RefSeq" id="NP_192232.5">
    <property type="nucleotide sequence ID" value="NM_116561.6"/>
</dbReference>
<dbReference type="SMR" id="Q9ZR08"/>
<dbReference type="FunCoup" id="Q9ZR08">
    <property type="interactions" value="18"/>
</dbReference>
<dbReference type="STRING" id="3702.Q9ZR08"/>
<dbReference type="GlyGen" id="Q9ZR08">
    <property type="glycosylation" value="7 sites"/>
</dbReference>
<dbReference type="iPTMnet" id="Q9ZR08"/>
<dbReference type="ProteomicsDB" id="242367"/>
<dbReference type="EnsemblPlants" id="AT4G03230.8">
    <property type="protein sequence ID" value="AT4G03230.8"/>
    <property type="gene ID" value="AT4G03230"/>
</dbReference>
<dbReference type="GeneID" id="828018"/>
<dbReference type="Gramene" id="AT4G03230.8">
    <property type="protein sequence ID" value="AT4G03230.8"/>
    <property type="gene ID" value="AT4G03230"/>
</dbReference>
<dbReference type="KEGG" id="ath:AT4G03230"/>
<dbReference type="Araport" id="AT4G03230"/>
<dbReference type="TAIR" id="AT4G03230"/>
<dbReference type="eggNOG" id="ENOG502QTV8">
    <property type="taxonomic scope" value="Eukaryota"/>
</dbReference>
<dbReference type="InParanoid" id="Q9ZR08"/>
<dbReference type="OMA" id="IAACWIW"/>
<dbReference type="PRO" id="PR:Q9ZR08"/>
<dbReference type="Proteomes" id="UP000006548">
    <property type="component" value="Chromosome 4"/>
</dbReference>
<dbReference type="ExpressionAtlas" id="Q9ZR08">
    <property type="expression patterns" value="baseline and differential"/>
</dbReference>
<dbReference type="GO" id="GO:0005886">
    <property type="term" value="C:plasma membrane"/>
    <property type="evidence" value="ECO:0007669"/>
    <property type="project" value="UniProtKB-SubCell"/>
</dbReference>
<dbReference type="GO" id="GO:0005524">
    <property type="term" value="F:ATP binding"/>
    <property type="evidence" value="ECO:0007669"/>
    <property type="project" value="UniProtKB-KW"/>
</dbReference>
<dbReference type="GO" id="GO:0005516">
    <property type="term" value="F:calmodulin binding"/>
    <property type="evidence" value="ECO:0000250"/>
    <property type="project" value="UniProtKB"/>
</dbReference>
<dbReference type="GO" id="GO:0030246">
    <property type="term" value="F:carbohydrate binding"/>
    <property type="evidence" value="ECO:0007669"/>
    <property type="project" value="UniProtKB-KW"/>
</dbReference>
<dbReference type="GO" id="GO:0106310">
    <property type="term" value="F:protein serine kinase activity"/>
    <property type="evidence" value="ECO:0007669"/>
    <property type="project" value="RHEA"/>
</dbReference>
<dbReference type="GO" id="GO:0004674">
    <property type="term" value="F:protein serine/threonine kinase activity"/>
    <property type="evidence" value="ECO:0000250"/>
    <property type="project" value="UniProtKB"/>
</dbReference>
<dbReference type="GO" id="GO:0031625">
    <property type="term" value="F:ubiquitin protein ligase binding"/>
    <property type="evidence" value="ECO:0007669"/>
    <property type="project" value="UniProtKB-ARBA"/>
</dbReference>
<dbReference type="GO" id="GO:0048544">
    <property type="term" value="P:recognition of pollen"/>
    <property type="evidence" value="ECO:0007669"/>
    <property type="project" value="InterPro"/>
</dbReference>
<dbReference type="CDD" id="cd00028">
    <property type="entry name" value="B_lectin"/>
    <property type="match status" value="1"/>
</dbReference>
<dbReference type="CDD" id="cd00054">
    <property type="entry name" value="EGF_CA"/>
    <property type="match status" value="1"/>
</dbReference>
<dbReference type="CDD" id="cd01098">
    <property type="entry name" value="PAN_AP_plant"/>
    <property type="match status" value="1"/>
</dbReference>
<dbReference type="CDD" id="cd14066">
    <property type="entry name" value="STKc_IRAK"/>
    <property type="match status" value="1"/>
</dbReference>
<dbReference type="FunFam" id="1.10.510.10:FF:000060">
    <property type="entry name" value="G-type lectin S-receptor-like serine/threonine-protein kinase"/>
    <property type="match status" value="1"/>
</dbReference>
<dbReference type="FunFam" id="2.90.10.10:FF:000003">
    <property type="entry name" value="G-type lectin S-receptor-like serine/threonine-protein kinase"/>
    <property type="match status" value="1"/>
</dbReference>
<dbReference type="FunFam" id="3.30.200.20:FF:000330">
    <property type="entry name" value="G-type lectin S-receptor-like serine/threonine-protein kinase At4g03230"/>
    <property type="match status" value="1"/>
</dbReference>
<dbReference type="Gene3D" id="2.90.10.10">
    <property type="entry name" value="Bulb-type lectin domain"/>
    <property type="match status" value="1"/>
</dbReference>
<dbReference type="Gene3D" id="3.30.200.20">
    <property type="entry name" value="Phosphorylase Kinase, domain 1"/>
    <property type="match status" value="1"/>
</dbReference>
<dbReference type="Gene3D" id="1.10.510.10">
    <property type="entry name" value="Transferase(Phosphotransferase) domain 1"/>
    <property type="match status" value="1"/>
</dbReference>
<dbReference type="InterPro" id="IPR001480">
    <property type="entry name" value="Bulb-type_lectin_dom"/>
</dbReference>
<dbReference type="InterPro" id="IPR036426">
    <property type="entry name" value="Bulb-type_lectin_dom_sf"/>
</dbReference>
<dbReference type="InterPro" id="IPR000742">
    <property type="entry name" value="EGF-like_dom"/>
</dbReference>
<dbReference type="InterPro" id="IPR011009">
    <property type="entry name" value="Kinase-like_dom_sf"/>
</dbReference>
<dbReference type="InterPro" id="IPR003609">
    <property type="entry name" value="Pan_app"/>
</dbReference>
<dbReference type="InterPro" id="IPR000719">
    <property type="entry name" value="Prot_kinase_dom"/>
</dbReference>
<dbReference type="InterPro" id="IPR021820">
    <property type="entry name" value="S-locus_recpt_kinase_C"/>
</dbReference>
<dbReference type="InterPro" id="IPR000858">
    <property type="entry name" value="S_locus_glycoprot_dom"/>
</dbReference>
<dbReference type="InterPro" id="IPR001245">
    <property type="entry name" value="Ser-Thr/Tyr_kinase_cat_dom"/>
</dbReference>
<dbReference type="InterPro" id="IPR008271">
    <property type="entry name" value="Ser/Thr_kinase_AS"/>
</dbReference>
<dbReference type="InterPro" id="IPR024171">
    <property type="entry name" value="SRK-like_kinase"/>
</dbReference>
<dbReference type="PANTHER" id="PTHR27002:SF1111">
    <property type="entry name" value="NON-SPECIFIC SERINE_THREONINE PROTEIN KINASE"/>
    <property type="match status" value="1"/>
</dbReference>
<dbReference type="PANTHER" id="PTHR27002">
    <property type="entry name" value="RECEPTOR-LIKE SERINE/THREONINE-PROTEIN KINASE SD1-8"/>
    <property type="match status" value="1"/>
</dbReference>
<dbReference type="Pfam" id="PF01453">
    <property type="entry name" value="B_lectin"/>
    <property type="match status" value="1"/>
</dbReference>
<dbReference type="Pfam" id="PF11883">
    <property type="entry name" value="DUF3403"/>
    <property type="match status" value="1"/>
</dbReference>
<dbReference type="Pfam" id="PF08276">
    <property type="entry name" value="PAN_2"/>
    <property type="match status" value="1"/>
</dbReference>
<dbReference type="Pfam" id="PF07714">
    <property type="entry name" value="PK_Tyr_Ser-Thr"/>
    <property type="match status" value="1"/>
</dbReference>
<dbReference type="Pfam" id="PF00954">
    <property type="entry name" value="S_locus_glycop"/>
    <property type="match status" value="1"/>
</dbReference>
<dbReference type="PIRSF" id="PIRSF000641">
    <property type="entry name" value="SRK"/>
    <property type="match status" value="1"/>
</dbReference>
<dbReference type="SMART" id="SM00108">
    <property type="entry name" value="B_lectin"/>
    <property type="match status" value="1"/>
</dbReference>
<dbReference type="SMART" id="SM00473">
    <property type="entry name" value="PAN_AP"/>
    <property type="match status" value="1"/>
</dbReference>
<dbReference type="SMART" id="SM00220">
    <property type="entry name" value="S_TKc"/>
    <property type="match status" value="1"/>
</dbReference>
<dbReference type="SUPFAM" id="SSF51110">
    <property type="entry name" value="alpha-D-mannose-specific plant lectins"/>
    <property type="match status" value="1"/>
</dbReference>
<dbReference type="SUPFAM" id="SSF56112">
    <property type="entry name" value="Protein kinase-like (PK-like)"/>
    <property type="match status" value="1"/>
</dbReference>
<dbReference type="PROSITE" id="PS50927">
    <property type="entry name" value="BULB_LECTIN"/>
    <property type="match status" value="1"/>
</dbReference>
<dbReference type="PROSITE" id="PS50026">
    <property type="entry name" value="EGF_3"/>
    <property type="match status" value="1"/>
</dbReference>
<dbReference type="PROSITE" id="PS50948">
    <property type="entry name" value="PAN"/>
    <property type="match status" value="1"/>
</dbReference>
<dbReference type="PROSITE" id="PS50011">
    <property type="entry name" value="PROTEIN_KINASE_DOM"/>
    <property type="match status" value="1"/>
</dbReference>
<dbReference type="PROSITE" id="PS00108">
    <property type="entry name" value="PROTEIN_KINASE_ST"/>
    <property type="match status" value="1"/>
</dbReference>
<name>Y4230_ARATH</name>
<feature type="signal peptide" evidence="3">
    <location>
        <begin position="1"/>
        <end position="19"/>
    </location>
</feature>
<feature type="chain" id="PRO_0000401328" description="G-type lectin S-receptor-like serine/threonine-protein kinase At4g03230">
    <location>
        <begin position="20"/>
        <end position="852"/>
    </location>
</feature>
<feature type="topological domain" description="Extracellular" evidence="3">
    <location>
        <begin position="20"/>
        <end position="444"/>
    </location>
</feature>
<feature type="transmembrane region" description="Helical" evidence="3">
    <location>
        <begin position="445"/>
        <end position="465"/>
    </location>
</feature>
<feature type="topological domain" description="Cytoplasmic" evidence="3">
    <location>
        <begin position="466"/>
        <end position="852"/>
    </location>
</feature>
<feature type="domain" description="Bulb-type lectin" evidence="4">
    <location>
        <begin position="20"/>
        <end position="154"/>
    </location>
</feature>
<feature type="domain" description="EGF-like" evidence="5">
    <location>
        <begin position="285"/>
        <end position="321"/>
    </location>
</feature>
<feature type="domain" description="PAN" evidence="7">
    <location>
        <begin position="339"/>
        <end position="426"/>
    </location>
</feature>
<feature type="domain" description="Protein kinase" evidence="6">
    <location>
        <begin position="532"/>
        <end position="819"/>
    </location>
</feature>
<feature type="region of interest" description="CaM-binding" evidence="1">
    <location>
        <begin position="621"/>
        <end position="638"/>
    </location>
</feature>
<feature type="region of interest" description="Disordered" evidence="9">
    <location>
        <begin position="826"/>
        <end position="852"/>
    </location>
</feature>
<feature type="compositionally biased region" description="Polar residues" evidence="9">
    <location>
        <begin position="834"/>
        <end position="845"/>
    </location>
</feature>
<feature type="active site" description="Proton acceptor" evidence="6 8">
    <location>
        <position position="657"/>
    </location>
</feature>
<feature type="binding site" evidence="6">
    <location>
        <begin position="538"/>
        <end position="546"/>
    </location>
    <ligand>
        <name>ATP</name>
        <dbReference type="ChEBI" id="CHEBI:30616"/>
    </ligand>
</feature>
<feature type="binding site" evidence="6">
    <location>
        <position position="560"/>
    </location>
    <ligand>
        <name>ATP</name>
        <dbReference type="ChEBI" id="CHEBI:30616"/>
    </ligand>
</feature>
<feature type="modified residue" description="Phosphoserine" evidence="2">
    <location>
        <position position="566"/>
    </location>
</feature>
<feature type="modified residue" description="Phosphoserine" evidence="2">
    <location>
        <position position="661"/>
    </location>
</feature>
<feature type="modified residue" description="Phosphoserine" evidence="2">
    <location>
        <position position="674"/>
    </location>
</feature>
<feature type="modified residue" description="Phosphothreonine" evidence="2">
    <location>
        <position position="691"/>
    </location>
</feature>
<feature type="modified residue" description="Phosphoserine" evidence="2">
    <location>
        <position position="831"/>
    </location>
</feature>
<feature type="modified residue" description="Phosphoserine" evidence="2">
    <location>
        <position position="840"/>
    </location>
</feature>
<feature type="modified residue" description="Phosphothreonine" evidence="2">
    <location>
        <position position="847"/>
    </location>
</feature>
<feature type="glycosylation site" description="N-linked (GlcNAc...) asparagine" evidence="3">
    <location>
        <position position="37"/>
    </location>
</feature>
<feature type="glycosylation site" description="N-linked (GlcNAc...) asparagine" evidence="3">
    <location>
        <position position="59"/>
    </location>
</feature>
<feature type="glycosylation site" description="N-linked (GlcNAc...) asparagine" evidence="3">
    <location>
        <position position="171"/>
    </location>
</feature>
<feature type="glycosylation site" description="N-linked (GlcNAc...) asparagine" evidence="3">
    <location>
        <position position="187"/>
    </location>
</feature>
<feature type="glycosylation site" description="N-linked (GlcNAc...) asparagine" evidence="3">
    <location>
        <position position="234"/>
    </location>
</feature>
<feature type="glycosylation site" description="N-linked (GlcNAc...) asparagine" evidence="3">
    <location>
        <position position="243"/>
    </location>
</feature>
<feature type="glycosylation site" description="N-linked (GlcNAc...) asparagine" evidence="3">
    <location>
        <position position="352"/>
    </location>
</feature>
<feature type="disulfide bond" evidence="1">
    <location>
        <begin position="289"/>
        <end position="301"/>
    </location>
</feature>
<feature type="disulfide bond" evidence="1">
    <location>
        <begin position="295"/>
        <end position="309"/>
    </location>
</feature>
<feature type="disulfide bond" evidence="1">
    <location>
        <begin position="373"/>
        <end position="400"/>
    </location>
</feature>
<feature type="disulfide bond" evidence="1">
    <location>
        <begin position="377"/>
        <end position="383"/>
    </location>
</feature>
<accession>Q9ZR08</accession>
<accession>F4JI70</accession>
<comment type="catalytic activity">
    <reaction>
        <text>L-seryl-[protein] + ATP = O-phospho-L-seryl-[protein] + ADP + H(+)</text>
        <dbReference type="Rhea" id="RHEA:17989"/>
        <dbReference type="Rhea" id="RHEA-COMP:9863"/>
        <dbReference type="Rhea" id="RHEA-COMP:11604"/>
        <dbReference type="ChEBI" id="CHEBI:15378"/>
        <dbReference type="ChEBI" id="CHEBI:29999"/>
        <dbReference type="ChEBI" id="CHEBI:30616"/>
        <dbReference type="ChEBI" id="CHEBI:83421"/>
        <dbReference type="ChEBI" id="CHEBI:456216"/>
        <dbReference type="EC" id="2.7.11.1"/>
    </reaction>
</comment>
<comment type="catalytic activity">
    <reaction>
        <text>L-threonyl-[protein] + ATP = O-phospho-L-threonyl-[protein] + ADP + H(+)</text>
        <dbReference type="Rhea" id="RHEA:46608"/>
        <dbReference type="Rhea" id="RHEA-COMP:11060"/>
        <dbReference type="Rhea" id="RHEA-COMP:11605"/>
        <dbReference type="ChEBI" id="CHEBI:15378"/>
        <dbReference type="ChEBI" id="CHEBI:30013"/>
        <dbReference type="ChEBI" id="CHEBI:30616"/>
        <dbReference type="ChEBI" id="CHEBI:61977"/>
        <dbReference type="ChEBI" id="CHEBI:456216"/>
        <dbReference type="EC" id="2.7.11.1"/>
    </reaction>
</comment>
<comment type="subcellular location">
    <subcellularLocation>
        <location evidence="1">Cell membrane</location>
        <topology evidence="1">Single-pass type I membrane protein</topology>
    </subcellularLocation>
</comment>
<comment type="similarity">
    <text evidence="6">Belongs to the protein kinase superfamily. Ser/Thr protein kinase family.</text>
</comment>
<comment type="sequence caution" evidence="10">
    <conflict type="erroneous gene model prediction">
        <sequence resource="EMBL-CDS" id="AEE82295"/>
    </conflict>
</comment>
<keyword id="KW-0067">ATP-binding</keyword>
<keyword id="KW-1003">Cell membrane</keyword>
<keyword id="KW-1015">Disulfide bond</keyword>
<keyword id="KW-0245">EGF-like domain</keyword>
<keyword id="KW-0325">Glycoprotein</keyword>
<keyword id="KW-0418">Kinase</keyword>
<keyword id="KW-0430">Lectin</keyword>
<keyword id="KW-0472">Membrane</keyword>
<keyword id="KW-0547">Nucleotide-binding</keyword>
<keyword id="KW-0597">Phosphoprotein</keyword>
<keyword id="KW-0675">Receptor</keyword>
<keyword id="KW-1185">Reference proteome</keyword>
<keyword id="KW-0723">Serine/threonine-protein kinase</keyword>
<keyword id="KW-0732">Signal</keyword>
<keyword id="KW-0808">Transferase</keyword>
<keyword id="KW-0812">Transmembrane</keyword>
<keyword id="KW-1133">Transmembrane helix</keyword>
<evidence type="ECO:0000250" key="1"/>
<evidence type="ECO:0000250" key="2">
    <source>
        <dbReference type="UniProtKB" id="Q9LPZ9"/>
    </source>
</evidence>
<evidence type="ECO:0000255" key="3"/>
<evidence type="ECO:0000255" key="4">
    <source>
        <dbReference type="PROSITE-ProRule" id="PRU00038"/>
    </source>
</evidence>
<evidence type="ECO:0000255" key="5">
    <source>
        <dbReference type="PROSITE-ProRule" id="PRU00076"/>
    </source>
</evidence>
<evidence type="ECO:0000255" key="6">
    <source>
        <dbReference type="PROSITE-ProRule" id="PRU00159"/>
    </source>
</evidence>
<evidence type="ECO:0000255" key="7">
    <source>
        <dbReference type="PROSITE-ProRule" id="PRU00315"/>
    </source>
</evidence>
<evidence type="ECO:0000255" key="8">
    <source>
        <dbReference type="PROSITE-ProRule" id="PRU10027"/>
    </source>
</evidence>
<evidence type="ECO:0000256" key="9">
    <source>
        <dbReference type="SAM" id="MobiDB-lite"/>
    </source>
</evidence>
<evidence type="ECO:0000305" key="10"/>
<gene>
    <name type="ordered locus">At4g03230</name>
    <name type="ORF">F4C21.16</name>
</gene>